<keyword id="KW-1185">Reference proteome</keyword>
<keyword id="KW-0687">Ribonucleoprotein</keyword>
<keyword id="KW-0689">Ribosomal protein</keyword>
<keyword id="KW-0694">RNA-binding</keyword>
<keyword id="KW-0699">rRNA-binding</keyword>
<gene>
    <name evidence="1" type="primary">rpsC</name>
    <name type="ordered locus">Jann_0591</name>
</gene>
<evidence type="ECO:0000255" key="1">
    <source>
        <dbReference type="HAMAP-Rule" id="MF_01309"/>
    </source>
</evidence>
<evidence type="ECO:0000256" key="2">
    <source>
        <dbReference type="SAM" id="MobiDB-lite"/>
    </source>
</evidence>
<evidence type="ECO:0000305" key="3"/>
<feature type="chain" id="PRO_0000293805" description="Small ribosomal subunit protein uS3">
    <location>
        <begin position="1"/>
        <end position="247"/>
    </location>
</feature>
<feature type="domain" description="KH type-2" evidence="1">
    <location>
        <begin position="51"/>
        <end position="119"/>
    </location>
</feature>
<feature type="region of interest" description="Disordered" evidence="2">
    <location>
        <begin position="224"/>
        <end position="247"/>
    </location>
</feature>
<feature type="compositionally biased region" description="Basic and acidic residues" evidence="2">
    <location>
        <begin position="224"/>
        <end position="233"/>
    </location>
</feature>
<accession>Q28UV4</accession>
<reference key="1">
    <citation type="submission" date="2006-02" db="EMBL/GenBank/DDBJ databases">
        <title>Complete sequence of chromosome of Jannaschia sp. CCS1.</title>
        <authorList>
            <consortium name="US DOE Joint Genome Institute"/>
            <person name="Copeland A."/>
            <person name="Lucas S."/>
            <person name="Lapidus A."/>
            <person name="Barry K."/>
            <person name="Detter J.C."/>
            <person name="Glavina del Rio T."/>
            <person name="Hammon N."/>
            <person name="Israni S."/>
            <person name="Pitluck S."/>
            <person name="Brettin T."/>
            <person name="Bruce D."/>
            <person name="Han C."/>
            <person name="Tapia R."/>
            <person name="Gilna P."/>
            <person name="Chertkov O."/>
            <person name="Saunders E."/>
            <person name="Schmutz J."/>
            <person name="Larimer F."/>
            <person name="Land M."/>
            <person name="Kyrpides N."/>
            <person name="Lykidis A."/>
            <person name="Moran M.A."/>
            <person name="Belas R."/>
            <person name="Ye W."/>
            <person name="Buchan A."/>
            <person name="Gonzalez J.M."/>
            <person name="Schell M.A."/>
            <person name="Richardson P."/>
        </authorList>
    </citation>
    <scope>NUCLEOTIDE SEQUENCE [LARGE SCALE GENOMIC DNA]</scope>
    <source>
        <strain>CCS1</strain>
    </source>
</reference>
<proteinExistence type="inferred from homology"/>
<comment type="function">
    <text evidence="1">Binds the lower part of the 30S subunit head. Binds mRNA in the 70S ribosome, positioning it for translation.</text>
</comment>
<comment type="subunit">
    <text evidence="1">Part of the 30S ribosomal subunit. Forms a tight complex with proteins S10 and S14.</text>
</comment>
<comment type="similarity">
    <text evidence="1">Belongs to the universal ribosomal protein uS3 family.</text>
</comment>
<protein>
    <recommendedName>
        <fullName evidence="1">Small ribosomal subunit protein uS3</fullName>
    </recommendedName>
    <alternativeName>
        <fullName evidence="3">30S ribosomal protein S3</fullName>
    </alternativeName>
</protein>
<name>RS3_JANSC</name>
<organism>
    <name type="scientific">Jannaschia sp. (strain CCS1)</name>
    <dbReference type="NCBI Taxonomy" id="290400"/>
    <lineage>
        <taxon>Bacteria</taxon>
        <taxon>Pseudomonadati</taxon>
        <taxon>Pseudomonadota</taxon>
        <taxon>Alphaproteobacteria</taxon>
        <taxon>Rhodobacterales</taxon>
        <taxon>Roseobacteraceae</taxon>
        <taxon>Jannaschia</taxon>
    </lineage>
</organism>
<sequence>MGHKVNPIGMRLQVNRTWDSRWYADTKDYGDLLLEDIKIRDYIKKGWWEHVAKRDKRPAGDAGISKIIIERPHKKCRVTIHSARPGVIIGKKGADIEGLRKKLAEITDSELHLNIVEIRKPELDARLVAESIAQQLERRVSFRRAMKRAVQNAMRMGSLGIRVNVAGRLGGAEIARTEWYREGRVPLHTLRADIDYAHAEAETAYGIIGIKTWIFKGEIMEHDPSAHDRRQQELQESGGASRPRRDR</sequence>
<dbReference type="EMBL" id="CP000264">
    <property type="protein sequence ID" value="ABD53508.1"/>
    <property type="molecule type" value="Genomic_DNA"/>
</dbReference>
<dbReference type="RefSeq" id="WP_011453716.1">
    <property type="nucleotide sequence ID" value="NC_007802.1"/>
</dbReference>
<dbReference type="SMR" id="Q28UV4"/>
<dbReference type="STRING" id="290400.Jann_0591"/>
<dbReference type="KEGG" id="jan:Jann_0591"/>
<dbReference type="eggNOG" id="COG0092">
    <property type="taxonomic scope" value="Bacteria"/>
</dbReference>
<dbReference type="HOGENOM" id="CLU_058591_0_2_5"/>
<dbReference type="OrthoDB" id="9806396at2"/>
<dbReference type="Proteomes" id="UP000008326">
    <property type="component" value="Chromosome"/>
</dbReference>
<dbReference type="GO" id="GO:0022627">
    <property type="term" value="C:cytosolic small ribosomal subunit"/>
    <property type="evidence" value="ECO:0007669"/>
    <property type="project" value="TreeGrafter"/>
</dbReference>
<dbReference type="GO" id="GO:0003729">
    <property type="term" value="F:mRNA binding"/>
    <property type="evidence" value="ECO:0007669"/>
    <property type="project" value="UniProtKB-UniRule"/>
</dbReference>
<dbReference type="GO" id="GO:0019843">
    <property type="term" value="F:rRNA binding"/>
    <property type="evidence" value="ECO:0007669"/>
    <property type="project" value="UniProtKB-UniRule"/>
</dbReference>
<dbReference type="GO" id="GO:0003735">
    <property type="term" value="F:structural constituent of ribosome"/>
    <property type="evidence" value="ECO:0007669"/>
    <property type="project" value="InterPro"/>
</dbReference>
<dbReference type="GO" id="GO:0006412">
    <property type="term" value="P:translation"/>
    <property type="evidence" value="ECO:0007669"/>
    <property type="project" value="UniProtKB-UniRule"/>
</dbReference>
<dbReference type="CDD" id="cd02412">
    <property type="entry name" value="KH-II_30S_S3"/>
    <property type="match status" value="1"/>
</dbReference>
<dbReference type="FunFam" id="3.30.1140.32:FF:000001">
    <property type="entry name" value="30S ribosomal protein S3"/>
    <property type="match status" value="1"/>
</dbReference>
<dbReference type="FunFam" id="3.30.300.20:FF:000001">
    <property type="entry name" value="30S ribosomal protein S3"/>
    <property type="match status" value="1"/>
</dbReference>
<dbReference type="Gene3D" id="3.30.300.20">
    <property type="match status" value="1"/>
</dbReference>
<dbReference type="Gene3D" id="3.30.1140.32">
    <property type="entry name" value="Ribosomal protein S3, C-terminal domain"/>
    <property type="match status" value="1"/>
</dbReference>
<dbReference type="HAMAP" id="MF_01309_B">
    <property type="entry name" value="Ribosomal_uS3_B"/>
    <property type="match status" value="1"/>
</dbReference>
<dbReference type="InterPro" id="IPR004087">
    <property type="entry name" value="KH_dom"/>
</dbReference>
<dbReference type="InterPro" id="IPR015946">
    <property type="entry name" value="KH_dom-like_a/b"/>
</dbReference>
<dbReference type="InterPro" id="IPR004044">
    <property type="entry name" value="KH_dom_type_2"/>
</dbReference>
<dbReference type="InterPro" id="IPR009019">
    <property type="entry name" value="KH_sf_prok-type"/>
</dbReference>
<dbReference type="InterPro" id="IPR036419">
    <property type="entry name" value="Ribosomal_S3_C_sf"/>
</dbReference>
<dbReference type="InterPro" id="IPR005704">
    <property type="entry name" value="Ribosomal_uS3_bac-typ"/>
</dbReference>
<dbReference type="InterPro" id="IPR001351">
    <property type="entry name" value="Ribosomal_uS3_C"/>
</dbReference>
<dbReference type="InterPro" id="IPR018280">
    <property type="entry name" value="Ribosomal_uS3_CS"/>
</dbReference>
<dbReference type="NCBIfam" id="TIGR01009">
    <property type="entry name" value="rpsC_bact"/>
    <property type="match status" value="1"/>
</dbReference>
<dbReference type="PANTHER" id="PTHR11760">
    <property type="entry name" value="30S/40S RIBOSOMAL PROTEIN S3"/>
    <property type="match status" value="1"/>
</dbReference>
<dbReference type="PANTHER" id="PTHR11760:SF19">
    <property type="entry name" value="SMALL RIBOSOMAL SUBUNIT PROTEIN US3C"/>
    <property type="match status" value="1"/>
</dbReference>
<dbReference type="Pfam" id="PF07650">
    <property type="entry name" value="KH_2"/>
    <property type="match status" value="1"/>
</dbReference>
<dbReference type="Pfam" id="PF00189">
    <property type="entry name" value="Ribosomal_S3_C"/>
    <property type="match status" value="1"/>
</dbReference>
<dbReference type="SMART" id="SM00322">
    <property type="entry name" value="KH"/>
    <property type="match status" value="1"/>
</dbReference>
<dbReference type="SUPFAM" id="SSF54814">
    <property type="entry name" value="Prokaryotic type KH domain (KH-domain type II)"/>
    <property type="match status" value="1"/>
</dbReference>
<dbReference type="SUPFAM" id="SSF54821">
    <property type="entry name" value="Ribosomal protein S3 C-terminal domain"/>
    <property type="match status" value="1"/>
</dbReference>
<dbReference type="PROSITE" id="PS50823">
    <property type="entry name" value="KH_TYPE_2"/>
    <property type="match status" value="1"/>
</dbReference>
<dbReference type="PROSITE" id="PS00548">
    <property type="entry name" value="RIBOSOMAL_S3"/>
    <property type="match status" value="1"/>
</dbReference>